<accession>Q1KVU8</accession>
<geneLocation type="chloroplast"/>
<protein>
    <recommendedName>
        <fullName evidence="1">Photosystem II protein D1</fullName>
        <shortName evidence="1">PSII D1 protein</shortName>
        <ecNumber evidence="1">1.10.3.9</ecNumber>
    </recommendedName>
    <alternativeName>
        <fullName evidence="1">Photosystem II Q(B) protein</fullName>
    </alternativeName>
</protein>
<feature type="initiator methionine" description="Removed" evidence="1">
    <location>
        <position position="1"/>
    </location>
</feature>
<feature type="chain" id="PRO_0000340064" description="Photosystem II protein D1" evidence="1">
    <location>
        <begin position="2"/>
        <end position="344"/>
    </location>
</feature>
<feature type="propeptide" id="PRO_0000340065" evidence="1 2">
    <location>
        <begin position="345"/>
        <end position="353"/>
    </location>
</feature>
<feature type="transmembrane region" description="Helical" evidence="1">
    <location>
        <begin position="29"/>
        <end position="46"/>
    </location>
</feature>
<feature type="transmembrane region" description="Helical" evidence="1">
    <location>
        <begin position="118"/>
        <end position="133"/>
    </location>
</feature>
<feature type="transmembrane region" description="Helical" evidence="1">
    <location>
        <begin position="142"/>
        <end position="156"/>
    </location>
</feature>
<feature type="transmembrane region" description="Helical" evidence="1">
    <location>
        <begin position="197"/>
        <end position="218"/>
    </location>
</feature>
<feature type="transmembrane region" description="Helical" evidence="1">
    <location>
        <begin position="274"/>
        <end position="288"/>
    </location>
</feature>
<feature type="binding site" description="axial binding residue" evidence="1">
    <location>
        <position position="118"/>
    </location>
    <ligand>
        <name>chlorophyll a</name>
        <dbReference type="ChEBI" id="CHEBI:58416"/>
        <label>ChlzD1</label>
    </ligand>
    <ligandPart>
        <name>Mg</name>
        <dbReference type="ChEBI" id="CHEBI:25107"/>
    </ligandPart>
</feature>
<feature type="binding site" evidence="1">
    <location>
        <position position="126"/>
    </location>
    <ligand>
        <name>pheophytin a</name>
        <dbReference type="ChEBI" id="CHEBI:136840"/>
        <label>D1</label>
    </ligand>
</feature>
<feature type="binding site" evidence="1">
    <location>
        <position position="170"/>
    </location>
    <ligand>
        <name>[CaMn4O5] cluster</name>
        <dbReference type="ChEBI" id="CHEBI:189552"/>
    </ligand>
</feature>
<feature type="binding site" evidence="1">
    <location>
        <position position="189"/>
    </location>
    <ligand>
        <name>[CaMn4O5] cluster</name>
        <dbReference type="ChEBI" id="CHEBI:189552"/>
    </ligand>
</feature>
<feature type="binding site" description="axial binding residue" evidence="1">
    <location>
        <position position="198"/>
    </location>
    <ligand>
        <name>chlorophyll a</name>
        <dbReference type="ChEBI" id="CHEBI:58416"/>
        <label>PD1</label>
    </ligand>
    <ligandPart>
        <name>Mg</name>
        <dbReference type="ChEBI" id="CHEBI:25107"/>
    </ligandPart>
</feature>
<feature type="binding site" evidence="1">
    <location>
        <position position="215"/>
    </location>
    <ligand>
        <name>a quinone</name>
        <dbReference type="ChEBI" id="CHEBI:132124"/>
        <label>B</label>
    </ligand>
</feature>
<feature type="binding site" evidence="1">
    <location>
        <position position="215"/>
    </location>
    <ligand>
        <name>Fe cation</name>
        <dbReference type="ChEBI" id="CHEBI:24875"/>
        <note>ligand shared with heterodimeric partner</note>
    </ligand>
</feature>
<feature type="binding site" evidence="1">
    <location>
        <begin position="264"/>
        <end position="265"/>
    </location>
    <ligand>
        <name>a quinone</name>
        <dbReference type="ChEBI" id="CHEBI:132124"/>
        <label>B</label>
    </ligand>
</feature>
<feature type="binding site" evidence="1">
    <location>
        <position position="272"/>
    </location>
    <ligand>
        <name>Fe cation</name>
        <dbReference type="ChEBI" id="CHEBI:24875"/>
        <note>ligand shared with heterodimeric partner</note>
    </ligand>
</feature>
<feature type="binding site" evidence="1">
    <location>
        <position position="332"/>
    </location>
    <ligand>
        <name>[CaMn4O5] cluster</name>
        <dbReference type="ChEBI" id="CHEBI:189552"/>
    </ligand>
</feature>
<feature type="binding site" evidence="1">
    <location>
        <position position="333"/>
    </location>
    <ligand>
        <name>[CaMn4O5] cluster</name>
        <dbReference type="ChEBI" id="CHEBI:189552"/>
    </ligand>
</feature>
<feature type="binding site" evidence="1">
    <location>
        <position position="342"/>
    </location>
    <ligand>
        <name>[CaMn4O5] cluster</name>
        <dbReference type="ChEBI" id="CHEBI:189552"/>
    </ligand>
</feature>
<feature type="binding site" evidence="1">
    <location>
        <position position="344"/>
    </location>
    <ligand>
        <name>[CaMn4O5] cluster</name>
        <dbReference type="ChEBI" id="CHEBI:189552"/>
    </ligand>
</feature>
<feature type="site" description="Tyrosine radical intermediate" evidence="1">
    <location>
        <position position="161"/>
    </location>
</feature>
<feature type="site" description="Stabilizes free radical intermediate" evidence="1">
    <location>
        <position position="190"/>
    </location>
</feature>
<feature type="site" description="Cleavage; by CTPA" evidence="1 2">
    <location>
        <begin position="344"/>
        <end position="345"/>
    </location>
</feature>
<feature type="modified residue" description="N-acetylthreonine" evidence="1">
    <location>
        <position position="2"/>
    </location>
</feature>
<feature type="modified residue" description="Phosphothreonine" evidence="1">
    <location>
        <position position="2"/>
    </location>
</feature>
<reference key="1">
    <citation type="journal article" date="2006" name="BMC Evol. Biol.">
        <title>The complete chloroplast genome sequence of the chlorophycean green alga Scenedesmus obliquus reveals a compact gene organization and a biased distribution of genes on the two DNA strands.</title>
        <authorList>
            <person name="de Cambiaire J.-C."/>
            <person name="Otis C."/>
            <person name="Lemieux C."/>
            <person name="Turmel M."/>
        </authorList>
    </citation>
    <scope>NUCLEOTIDE SEQUENCE [LARGE SCALE GENOMIC DNA]</scope>
    <source>
        <strain>UTEX 393</strain>
    </source>
</reference>
<reference key="2">
    <citation type="journal article" date="1997" name="J. Biol. Chem.">
        <title>The D1 C-terminal processing protease of photosystem II from Scenedesmus obliquus. Protein purification and gene characterization in wild type and processing mutants.</title>
        <authorList>
            <person name="Trost J.T."/>
            <person name="Chisholm D.A."/>
            <person name="Jordan D.B."/>
            <person name="Diner B.A."/>
        </authorList>
    </citation>
    <scope>PROBABLE CLEAVAGE</scope>
    <source>
        <strain>D3</strain>
    </source>
</reference>
<keyword id="KW-0007">Acetylation</keyword>
<keyword id="KW-0106">Calcium</keyword>
<keyword id="KW-0148">Chlorophyll</keyword>
<keyword id="KW-0150">Chloroplast</keyword>
<keyword id="KW-0157">Chromophore</keyword>
<keyword id="KW-0249">Electron transport</keyword>
<keyword id="KW-0359">Herbicide resistance</keyword>
<keyword id="KW-0408">Iron</keyword>
<keyword id="KW-0460">Magnesium</keyword>
<keyword id="KW-0464">Manganese</keyword>
<keyword id="KW-0472">Membrane</keyword>
<keyword id="KW-0479">Metal-binding</keyword>
<keyword id="KW-0560">Oxidoreductase</keyword>
<keyword id="KW-0597">Phosphoprotein</keyword>
<keyword id="KW-0602">Photosynthesis</keyword>
<keyword id="KW-0604">Photosystem II</keyword>
<keyword id="KW-0934">Plastid</keyword>
<keyword id="KW-0793">Thylakoid</keyword>
<keyword id="KW-0812">Transmembrane</keyword>
<keyword id="KW-1133">Transmembrane helix</keyword>
<keyword id="KW-0813">Transport</keyword>
<evidence type="ECO:0000255" key="1">
    <source>
        <dbReference type="HAMAP-Rule" id="MF_01379"/>
    </source>
</evidence>
<evidence type="ECO:0000269" key="2">
    <source>
    </source>
</evidence>
<comment type="function">
    <text evidence="1">Photosystem II (PSII) is a light-driven water:plastoquinone oxidoreductase that uses light energy to abstract electrons from H(2)O, generating O(2) and a proton gradient subsequently used for ATP formation. It consists of a core antenna complex that captures photons, and an electron transfer chain that converts photonic excitation into a charge separation. The D1/D2 (PsbA/PsbD) reaction center heterodimer binds P680, the primary electron donor of PSII as well as several subsequent electron acceptors.</text>
</comment>
<comment type="catalytic activity">
    <reaction evidence="1">
        <text>2 a plastoquinone + 4 hnu + 2 H2O = 2 a plastoquinol + O2</text>
        <dbReference type="Rhea" id="RHEA:36359"/>
        <dbReference type="Rhea" id="RHEA-COMP:9561"/>
        <dbReference type="Rhea" id="RHEA-COMP:9562"/>
        <dbReference type="ChEBI" id="CHEBI:15377"/>
        <dbReference type="ChEBI" id="CHEBI:15379"/>
        <dbReference type="ChEBI" id="CHEBI:17757"/>
        <dbReference type="ChEBI" id="CHEBI:30212"/>
        <dbReference type="ChEBI" id="CHEBI:62192"/>
        <dbReference type="EC" id="1.10.3.9"/>
    </reaction>
</comment>
<comment type="cofactor">
    <text evidence="1">The D1/D2 heterodimer binds P680, chlorophylls that are the primary electron donor of PSII, and subsequent electron acceptors. It shares a non-heme iron and each subunit binds pheophytin, quinone, additional chlorophylls, carotenoids and lipids. D1 provides most of the ligands for the Mn4-Ca-O5 cluster of the oxygen-evolving complex (OEC). There is also a Cl(-1) ion associated with D1 and D2, which is required for oxygen evolution. The PSII complex binds additional chlorophylls, carotenoids and specific lipids.</text>
</comment>
<comment type="subunit">
    <text evidence="1">PSII is composed of 1 copy each of membrane proteins PsbA, PsbB, PsbC, PsbD, PsbE, PsbF, PsbH, PsbI, PsbJ, PsbK, PsbL, PsbM, PsbT, PsbX, PsbY, PsbZ, Psb30/Ycf12, at least 3 peripheral proteins of the oxygen-evolving complex and a large number of cofactors. It forms dimeric complexes.</text>
</comment>
<comment type="subcellular location">
    <subcellularLocation>
        <location evidence="1">Plastid</location>
        <location evidence="1">Chloroplast thylakoid membrane</location>
        <topology evidence="1">Multi-pass membrane protein</topology>
    </subcellularLocation>
</comment>
<comment type="PTM">
    <text evidence="1 2">The 9 C-terminal residues are removed, probably by CTPA (AC O04073); processing is essential to allow assembly of the oxygen-evolving complex and thus photosynthetic growth.</text>
</comment>
<comment type="PTM">
    <text evidence="1">Tyr-161 forms a radical intermediate that is referred to as redox-active TyrZ, YZ or Y-Z.</text>
</comment>
<comment type="miscellaneous">
    <text evidence="1">2 of the reaction center chlorophylls (ChlD1 and ChlD2) are entirely coordinated by water.</text>
</comment>
<comment type="miscellaneous">
    <text evidence="1">Herbicides such as atrazine, BNT, diuron or ioxynil bind in the Q(B) binding site and block subsequent electron transfer.</text>
</comment>
<comment type="similarity">
    <text evidence="1">Belongs to the reaction center PufL/M/PsbA/D family.</text>
</comment>
<gene>
    <name evidence="1" type="primary">psbA</name>
</gene>
<proteinExistence type="evidence at protein level"/>
<name>PSBA_TETOB</name>
<dbReference type="EC" id="1.10.3.9" evidence="1"/>
<dbReference type="EMBL" id="DQ396875">
    <property type="protein sequence ID" value="ABD48259.1"/>
    <property type="molecule type" value="Genomic_DNA"/>
</dbReference>
<dbReference type="RefSeq" id="YP_635976.1">
    <property type="nucleotide sequence ID" value="NC_008101.1"/>
</dbReference>
<dbReference type="SMR" id="Q1KVU8"/>
<dbReference type="GeneID" id="4099837"/>
<dbReference type="GO" id="GO:0009535">
    <property type="term" value="C:chloroplast thylakoid membrane"/>
    <property type="evidence" value="ECO:0007669"/>
    <property type="project" value="UniProtKB-SubCell"/>
</dbReference>
<dbReference type="GO" id="GO:0009523">
    <property type="term" value="C:photosystem II"/>
    <property type="evidence" value="ECO:0007669"/>
    <property type="project" value="UniProtKB-KW"/>
</dbReference>
<dbReference type="GO" id="GO:0016168">
    <property type="term" value="F:chlorophyll binding"/>
    <property type="evidence" value="ECO:0007669"/>
    <property type="project" value="UniProtKB-UniRule"/>
</dbReference>
<dbReference type="GO" id="GO:0045156">
    <property type="term" value="F:electron transporter, transferring electrons within the cyclic electron transport pathway of photosynthesis activity"/>
    <property type="evidence" value="ECO:0007669"/>
    <property type="project" value="InterPro"/>
</dbReference>
<dbReference type="GO" id="GO:0005506">
    <property type="term" value="F:iron ion binding"/>
    <property type="evidence" value="ECO:0007669"/>
    <property type="project" value="UniProtKB-UniRule"/>
</dbReference>
<dbReference type="GO" id="GO:0016682">
    <property type="term" value="F:oxidoreductase activity, acting on diphenols and related substances as donors, oxygen as acceptor"/>
    <property type="evidence" value="ECO:0007669"/>
    <property type="project" value="UniProtKB-UniRule"/>
</dbReference>
<dbReference type="GO" id="GO:0010242">
    <property type="term" value="F:oxygen evolving activity"/>
    <property type="evidence" value="ECO:0007669"/>
    <property type="project" value="UniProtKB-EC"/>
</dbReference>
<dbReference type="GO" id="GO:0009772">
    <property type="term" value="P:photosynthetic electron transport in photosystem II"/>
    <property type="evidence" value="ECO:0007669"/>
    <property type="project" value="InterPro"/>
</dbReference>
<dbReference type="GO" id="GO:0009635">
    <property type="term" value="P:response to herbicide"/>
    <property type="evidence" value="ECO:0007669"/>
    <property type="project" value="UniProtKB-KW"/>
</dbReference>
<dbReference type="CDD" id="cd09289">
    <property type="entry name" value="Photosystem-II_D1"/>
    <property type="match status" value="1"/>
</dbReference>
<dbReference type="FunFam" id="1.20.85.10:FF:000002">
    <property type="entry name" value="Photosystem II protein D1"/>
    <property type="match status" value="1"/>
</dbReference>
<dbReference type="Gene3D" id="1.20.85.10">
    <property type="entry name" value="Photosystem II protein D1-like"/>
    <property type="match status" value="1"/>
</dbReference>
<dbReference type="HAMAP" id="MF_01379">
    <property type="entry name" value="PSII_PsbA_D1"/>
    <property type="match status" value="1"/>
</dbReference>
<dbReference type="InterPro" id="IPR055266">
    <property type="entry name" value="D1/D2"/>
</dbReference>
<dbReference type="InterPro" id="IPR036854">
    <property type="entry name" value="Photo_II_D1/D2_sf"/>
</dbReference>
<dbReference type="InterPro" id="IPR000484">
    <property type="entry name" value="Photo_RC_L/M"/>
</dbReference>
<dbReference type="InterPro" id="IPR055265">
    <property type="entry name" value="Photo_RC_L/M_CS"/>
</dbReference>
<dbReference type="InterPro" id="IPR005867">
    <property type="entry name" value="PSII_D1"/>
</dbReference>
<dbReference type="NCBIfam" id="TIGR01151">
    <property type="entry name" value="psbA"/>
    <property type="match status" value="1"/>
</dbReference>
<dbReference type="PANTHER" id="PTHR33149:SF12">
    <property type="entry name" value="PHOTOSYSTEM II D2 PROTEIN"/>
    <property type="match status" value="1"/>
</dbReference>
<dbReference type="PANTHER" id="PTHR33149">
    <property type="entry name" value="PHOTOSYSTEM II PROTEIN D1"/>
    <property type="match status" value="1"/>
</dbReference>
<dbReference type="Pfam" id="PF00124">
    <property type="entry name" value="Photo_RC"/>
    <property type="match status" value="1"/>
</dbReference>
<dbReference type="PRINTS" id="PR00256">
    <property type="entry name" value="REACTNCENTRE"/>
</dbReference>
<dbReference type="SUPFAM" id="SSF81483">
    <property type="entry name" value="Bacterial photosystem II reaction centre, L and M subunits"/>
    <property type="match status" value="1"/>
</dbReference>
<dbReference type="PROSITE" id="PS00244">
    <property type="entry name" value="REACTION_CENTER"/>
    <property type="match status" value="1"/>
</dbReference>
<sequence length="353" mass="38894">MTAILAKNEASSLWARFCEWITSTENRLYIGWFGVIMIPTLLTATSVFIIAFIAAPPVDIDGIREPVSGSLLYGNNIISGAVVPTSNAIGLHFYPIWEAASLDEWLYNGGPYQLIVCHFFLGICCYMGREWELSYRLGMRPWIAVAYSAPVAAATAVFIIYPIGQGSFSDGMPLGISGTFNFMIVFQAEHNILMHPFHMLGVAGVFGGSLFSAMHGSLVTSSLIRETTENESANEGYKFGQEEETYNIVAAHGYFGRLIFQYASFNNSRSLHFFLAAWPVVGIWFTALGISTMAFNLNGFNFNQSVVDSQGRVLNTWADIINRANLGMEVMHERNAHNFPLDLASVEAPSVNA</sequence>
<organism>
    <name type="scientific">Tetradesmus obliquus</name>
    <name type="common">Green alga</name>
    <name type="synonym">Acutodesmus obliquus</name>
    <dbReference type="NCBI Taxonomy" id="3088"/>
    <lineage>
        <taxon>Eukaryota</taxon>
        <taxon>Viridiplantae</taxon>
        <taxon>Chlorophyta</taxon>
        <taxon>core chlorophytes</taxon>
        <taxon>Chlorophyceae</taxon>
        <taxon>CS clade</taxon>
        <taxon>Sphaeropleales</taxon>
        <taxon>Scenedesmaceae</taxon>
        <taxon>Tetradesmus</taxon>
    </lineage>
</organism>